<keyword id="KW-0238">DNA-binding</keyword>
<keyword id="KW-0371">Homeobox</keyword>
<keyword id="KW-0539">Nucleus</keyword>
<keyword id="KW-1185">Reference proteome</keyword>
<accession>P48001</accession>
<accession>Q8GXD4</accession>
<accession>Q9FY59</accession>
<protein>
    <recommendedName>
        <fullName>Homeobox protein knotted-1-like 4</fullName>
    </recommendedName>
    <alternativeName>
        <fullName>Protein KNAT4</fullName>
    </alternativeName>
</protein>
<name>KNAT4_ARATH</name>
<sequence length="393" mass="44385">MAFHNNHFNHFTDQQQHQPPPPPQQQQQQHFQESAPPNWLLRSDNNFLNLHTAASAAATSSDSPSSAAANQWLSRSSSFLQRGNTANNNNNETSGDVIEDVPGGEESMIGEKKEAERWQNARHKAEILSHPLYEQLLSAHVACLRIATPVDQLPRIDAQLAQSQNVVAKYSTLEAAQGLLAGDDKELDHFMTHYVLLLCSFKEQLQQHVRVHAMEAVMACWEIEQSLQSFTGVSPGEGTGATMSEDEDEQVESDAHLFDGSLDGLGFGPLVPTESERSLMERVRQELKHELKQGYKEKIVDIREEILRKRRAGKLPGDTTSVLKSWWQSHSKWPYPTEEDKARLVQETGLQLKQINNWFINQRKRNWHSNPSSSTVSKNKRRSNAGENSGRDR</sequence>
<gene>
    <name type="primary">KNAT4</name>
    <name type="ordered locus">At5g11060</name>
    <name type="ORF">T5K6_50</name>
</gene>
<comment type="subunit">
    <text evidence="1 5 6">May form heterodimeric complex with the TALE/BELL proteins (By similarity). Interacts with OFP1, OFP2, OFP4 and OFP12 (PubMed:15781858). Interacts with KNATM-B (PubMed:18398054).</text>
</comment>
<comment type="subcellular location">
    <subcellularLocation>
        <location evidence="7">Nucleus</location>
    </subcellularLocation>
</comment>
<comment type="similarity">
    <text evidence="3">Belongs to the TALE/KNOX homeobox family.</text>
</comment>
<comment type="sequence caution" evidence="7">
    <conflict type="erroneous gene model prediction">
        <sequence resource="EMBL-CDS" id="CAC03454"/>
    </conflict>
</comment>
<proteinExistence type="evidence at protein level"/>
<reference key="1">
    <citation type="journal article" date="1996" name="Plant Mol. Biol.">
        <title>Three knotted1-like homeobox genes in Arabidopsis.</title>
        <authorList>
            <person name="Serikawa K.A."/>
            <person name="Martinez-Laborda A."/>
            <person name="Zambryski P.C."/>
        </authorList>
    </citation>
    <scope>NUCLEOTIDE SEQUENCE [MRNA]</scope>
</reference>
<reference key="2">
    <citation type="journal article" date="2000" name="Nature">
        <title>Sequence and analysis of chromosome 5 of the plant Arabidopsis thaliana.</title>
        <authorList>
            <person name="Tabata S."/>
            <person name="Kaneko T."/>
            <person name="Nakamura Y."/>
            <person name="Kotani H."/>
            <person name="Kato T."/>
            <person name="Asamizu E."/>
            <person name="Miyajima N."/>
            <person name="Sasamoto S."/>
            <person name="Kimura T."/>
            <person name="Hosouchi T."/>
            <person name="Kawashima K."/>
            <person name="Kohara M."/>
            <person name="Matsumoto M."/>
            <person name="Matsuno A."/>
            <person name="Muraki A."/>
            <person name="Nakayama S."/>
            <person name="Nakazaki N."/>
            <person name="Naruo K."/>
            <person name="Okumura S."/>
            <person name="Shinpo S."/>
            <person name="Takeuchi C."/>
            <person name="Wada T."/>
            <person name="Watanabe A."/>
            <person name="Yamada M."/>
            <person name="Yasuda M."/>
            <person name="Sato S."/>
            <person name="de la Bastide M."/>
            <person name="Huang E."/>
            <person name="Spiegel L."/>
            <person name="Gnoj L."/>
            <person name="O'Shaughnessy A."/>
            <person name="Preston R."/>
            <person name="Habermann K."/>
            <person name="Murray J."/>
            <person name="Johnson D."/>
            <person name="Rohlfing T."/>
            <person name="Nelson J."/>
            <person name="Stoneking T."/>
            <person name="Pepin K."/>
            <person name="Spieth J."/>
            <person name="Sekhon M."/>
            <person name="Armstrong J."/>
            <person name="Becker M."/>
            <person name="Belter E."/>
            <person name="Cordum H."/>
            <person name="Cordes M."/>
            <person name="Courtney L."/>
            <person name="Courtney W."/>
            <person name="Dante M."/>
            <person name="Du H."/>
            <person name="Edwards J."/>
            <person name="Fryman J."/>
            <person name="Haakensen B."/>
            <person name="Lamar E."/>
            <person name="Latreille P."/>
            <person name="Leonard S."/>
            <person name="Meyer R."/>
            <person name="Mulvaney E."/>
            <person name="Ozersky P."/>
            <person name="Riley A."/>
            <person name="Strowmatt C."/>
            <person name="Wagner-McPherson C."/>
            <person name="Wollam A."/>
            <person name="Yoakum M."/>
            <person name="Bell M."/>
            <person name="Dedhia N."/>
            <person name="Parnell L."/>
            <person name="Shah R."/>
            <person name="Rodriguez M."/>
            <person name="Hoon See L."/>
            <person name="Vil D."/>
            <person name="Baker J."/>
            <person name="Kirchoff K."/>
            <person name="Toth K."/>
            <person name="King L."/>
            <person name="Bahret A."/>
            <person name="Miller B."/>
            <person name="Marra M.A."/>
            <person name="Martienssen R."/>
            <person name="McCombie W.R."/>
            <person name="Wilson R.K."/>
            <person name="Murphy G."/>
            <person name="Bancroft I."/>
            <person name="Volckaert G."/>
            <person name="Wambutt R."/>
            <person name="Duesterhoeft A."/>
            <person name="Stiekema W."/>
            <person name="Pohl T."/>
            <person name="Entian K.-D."/>
            <person name="Terryn N."/>
            <person name="Hartley N."/>
            <person name="Bent E."/>
            <person name="Johnson S."/>
            <person name="Langham S.-A."/>
            <person name="McCullagh B."/>
            <person name="Robben J."/>
            <person name="Grymonprez B."/>
            <person name="Zimmermann W."/>
            <person name="Ramsperger U."/>
            <person name="Wedler H."/>
            <person name="Balke K."/>
            <person name="Wedler E."/>
            <person name="Peters S."/>
            <person name="van Staveren M."/>
            <person name="Dirkse W."/>
            <person name="Mooijman P."/>
            <person name="Klein Lankhorst R."/>
            <person name="Weitzenegger T."/>
            <person name="Bothe G."/>
            <person name="Rose M."/>
            <person name="Hauf J."/>
            <person name="Berneiser S."/>
            <person name="Hempel S."/>
            <person name="Feldpausch M."/>
            <person name="Lamberth S."/>
            <person name="Villarroel R."/>
            <person name="Gielen J."/>
            <person name="Ardiles W."/>
            <person name="Bents O."/>
            <person name="Lemcke K."/>
            <person name="Kolesov G."/>
            <person name="Mayer K.F.X."/>
            <person name="Rudd S."/>
            <person name="Schoof H."/>
            <person name="Schueller C."/>
            <person name="Zaccaria P."/>
            <person name="Mewes H.-W."/>
            <person name="Bevan M."/>
            <person name="Fransz P.F."/>
        </authorList>
    </citation>
    <scope>NUCLEOTIDE SEQUENCE [LARGE SCALE GENOMIC DNA]</scope>
    <source>
        <strain>cv. Columbia</strain>
    </source>
</reference>
<reference key="3">
    <citation type="journal article" date="2017" name="Plant J.">
        <title>Araport11: a complete reannotation of the Arabidopsis thaliana reference genome.</title>
        <authorList>
            <person name="Cheng C.Y."/>
            <person name="Krishnakumar V."/>
            <person name="Chan A.P."/>
            <person name="Thibaud-Nissen F."/>
            <person name="Schobel S."/>
            <person name="Town C.D."/>
        </authorList>
    </citation>
    <scope>GENOME REANNOTATION</scope>
    <source>
        <strain>cv. Columbia</strain>
    </source>
</reference>
<reference key="4">
    <citation type="journal article" date="2002" name="Science">
        <title>Functional annotation of a full-length Arabidopsis cDNA collection.</title>
        <authorList>
            <person name="Seki M."/>
            <person name="Narusaka M."/>
            <person name="Kamiya A."/>
            <person name="Ishida J."/>
            <person name="Satou M."/>
            <person name="Sakurai T."/>
            <person name="Nakajima M."/>
            <person name="Enju A."/>
            <person name="Akiyama K."/>
            <person name="Oono Y."/>
            <person name="Muramatsu M."/>
            <person name="Hayashizaki Y."/>
            <person name="Kawai J."/>
            <person name="Carninci P."/>
            <person name="Itoh M."/>
            <person name="Ishii Y."/>
            <person name="Arakawa T."/>
            <person name="Shibata K."/>
            <person name="Shinagawa A."/>
            <person name="Shinozaki K."/>
        </authorList>
    </citation>
    <scope>NUCLEOTIDE SEQUENCE [LARGE SCALE MRNA]</scope>
    <source>
        <strain>cv. Columbia</strain>
    </source>
</reference>
<reference key="5">
    <citation type="journal article" date="2005" name="Proc. Natl. Acad. Sci. U.S.A.">
        <title>A central role of Arabidopsis thaliana ovate family proteins in networking and subcellular localization of 3-aa loop extension homeodomain proteins.</title>
        <authorList>
            <person name="Hackbusch J."/>
            <person name="Richter K."/>
            <person name="Muller J."/>
            <person name="Salamini F."/>
            <person name="Uhrig J.F."/>
        </authorList>
    </citation>
    <scope>INTERACTION WITH OFP1; OFP2; OFP4 AND OFP12</scope>
</reference>
<reference key="6">
    <citation type="journal article" date="2008" name="Plant Cell">
        <title>KNOX lost the OX: the Arabidopsis KNATM gene defines a novel class of KNOX transcriptional regulators missing the homeodomain.</title>
        <authorList>
            <person name="Magnani E."/>
            <person name="Hake S."/>
        </authorList>
    </citation>
    <scope>INTERACTION WITH KNATM</scope>
</reference>
<dbReference type="EMBL" id="X92393">
    <property type="protein sequence ID" value="CAA63131.1"/>
    <property type="molecule type" value="mRNA"/>
</dbReference>
<dbReference type="EMBL" id="AL391222">
    <property type="protein sequence ID" value="CAC03454.1"/>
    <property type="status" value="ALT_SEQ"/>
    <property type="molecule type" value="Genomic_DNA"/>
</dbReference>
<dbReference type="EMBL" id="CP002688">
    <property type="protein sequence ID" value="AED91630.1"/>
    <property type="molecule type" value="Genomic_DNA"/>
</dbReference>
<dbReference type="EMBL" id="AK118296">
    <property type="protein sequence ID" value="BAC42914.1"/>
    <property type="molecule type" value="mRNA"/>
</dbReference>
<dbReference type="PIR" id="T51795">
    <property type="entry name" value="T51795"/>
</dbReference>
<dbReference type="RefSeq" id="NP_196667.2">
    <property type="nucleotide sequence ID" value="NM_121144.4"/>
</dbReference>
<dbReference type="SMR" id="P48001"/>
<dbReference type="BioGRID" id="16251">
    <property type="interactions" value="13"/>
</dbReference>
<dbReference type="FunCoup" id="P48001">
    <property type="interactions" value="235"/>
</dbReference>
<dbReference type="IntAct" id="P48001">
    <property type="interactions" value="11"/>
</dbReference>
<dbReference type="STRING" id="3702.P48001"/>
<dbReference type="iPTMnet" id="P48001"/>
<dbReference type="PaxDb" id="3702-AT5G11060.1"/>
<dbReference type="ProteomicsDB" id="250695"/>
<dbReference type="EnsemblPlants" id="AT5G11060.1">
    <property type="protein sequence ID" value="AT5G11060.1"/>
    <property type="gene ID" value="AT5G11060"/>
</dbReference>
<dbReference type="GeneID" id="830973"/>
<dbReference type="Gramene" id="AT5G11060.1">
    <property type="protein sequence ID" value="AT5G11060.1"/>
    <property type="gene ID" value="AT5G11060"/>
</dbReference>
<dbReference type="KEGG" id="ath:AT5G11060"/>
<dbReference type="Araport" id="AT5G11060"/>
<dbReference type="TAIR" id="AT5G11060">
    <property type="gene designation" value="KNAT4"/>
</dbReference>
<dbReference type="eggNOG" id="KOG0773">
    <property type="taxonomic scope" value="Eukaryota"/>
</dbReference>
<dbReference type="HOGENOM" id="CLU_040111_1_0_1"/>
<dbReference type="InParanoid" id="P48001"/>
<dbReference type="OMA" id="ANIFDIG"/>
<dbReference type="PhylomeDB" id="P48001"/>
<dbReference type="CD-CODE" id="4299E36E">
    <property type="entry name" value="Nucleolus"/>
</dbReference>
<dbReference type="PRO" id="PR:P48001"/>
<dbReference type="Proteomes" id="UP000006548">
    <property type="component" value="Chromosome 5"/>
</dbReference>
<dbReference type="ExpressionAtlas" id="P48001">
    <property type="expression patterns" value="baseline and differential"/>
</dbReference>
<dbReference type="GO" id="GO:0005829">
    <property type="term" value="C:cytosol"/>
    <property type="evidence" value="ECO:0000314"/>
    <property type="project" value="TAIR"/>
</dbReference>
<dbReference type="GO" id="GO:0005634">
    <property type="term" value="C:nucleus"/>
    <property type="evidence" value="ECO:0000314"/>
    <property type="project" value="TAIR"/>
</dbReference>
<dbReference type="GO" id="GO:0003677">
    <property type="term" value="F:DNA binding"/>
    <property type="evidence" value="ECO:0007669"/>
    <property type="project" value="UniProtKB-KW"/>
</dbReference>
<dbReference type="GO" id="GO:0003700">
    <property type="term" value="F:DNA-binding transcription factor activity"/>
    <property type="evidence" value="ECO:0000250"/>
    <property type="project" value="TAIR"/>
</dbReference>
<dbReference type="GO" id="GO:0009416">
    <property type="term" value="P:response to light stimulus"/>
    <property type="evidence" value="ECO:0000270"/>
    <property type="project" value="TAIR"/>
</dbReference>
<dbReference type="CDD" id="cd00086">
    <property type="entry name" value="homeodomain"/>
    <property type="match status" value="1"/>
</dbReference>
<dbReference type="FunFam" id="1.10.10.60:FF:000143">
    <property type="entry name" value="homeobox protein knotted-1-like 3 isoform X1"/>
    <property type="match status" value="1"/>
</dbReference>
<dbReference type="Gene3D" id="1.10.10.60">
    <property type="entry name" value="Homeodomain-like"/>
    <property type="match status" value="1"/>
</dbReference>
<dbReference type="InterPro" id="IPR005539">
    <property type="entry name" value="ELK_dom"/>
</dbReference>
<dbReference type="InterPro" id="IPR001356">
    <property type="entry name" value="HD"/>
</dbReference>
<dbReference type="InterPro" id="IPR009057">
    <property type="entry name" value="Homeodomain-like_sf"/>
</dbReference>
<dbReference type="InterPro" id="IPR008422">
    <property type="entry name" value="KN_HD"/>
</dbReference>
<dbReference type="InterPro" id="IPR005540">
    <property type="entry name" value="KNOX1"/>
</dbReference>
<dbReference type="InterPro" id="IPR005541">
    <property type="entry name" value="KNOX2"/>
</dbReference>
<dbReference type="InterPro" id="IPR050224">
    <property type="entry name" value="TALE_homeobox"/>
</dbReference>
<dbReference type="PANTHER" id="PTHR11850">
    <property type="entry name" value="HOMEOBOX PROTEIN TRANSCRIPTION FACTORS"/>
    <property type="match status" value="1"/>
</dbReference>
<dbReference type="Pfam" id="PF03789">
    <property type="entry name" value="ELK"/>
    <property type="match status" value="1"/>
</dbReference>
<dbReference type="Pfam" id="PF05920">
    <property type="entry name" value="Homeobox_KN"/>
    <property type="match status" value="1"/>
</dbReference>
<dbReference type="Pfam" id="PF03790">
    <property type="entry name" value="KNOX1"/>
    <property type="match status" value="1"/>
</dbReference>
<dbReference type="Pfam" id="PF03791">
    <property type="entry name" value="KNOX2"/>
    <property type="match status" value="1"/>
</dbReference>
<dbReference type="SMART" id="SM01188">
    <property type="entry name" value="ELK"/>
    <property type="match status" value="1"/>
</dbReference>
<dbReference type="SMART" id="SM00389">
    <property type="entry name" value="HOX"/>
    <property type="match status" value="1"/>
</dbReference>
<dbReference type="SMART" id="SM01255">
    <property type="entry name" value="KNOX1"/>
    <property type="match status" value="1"/>
</dbReference>
<dbReference type="SMART" id="SM01256">
    <property type="entry name" value="KNOX2"/>
    <property type="match status" value="1"/>
</dbReference>
<dbReference type="SUPFAM" id="SSF46689">
    <property type="entry name" value="Homeodomain-like"/>
    <property type="match status" value="1"/>
</dbReference>
<dbReference type="PROSITE" id="PS51213">
    <property type="entry name" value="ELK"/>
    <property type="match status" value="1"/>
</dbReference>
<dbReference type="PROSITE" id="PS00027">
    <property type="entry name" value="HOMEOBOX_1"/>
    <property type="match status" value="1"/>
</dbReference>
<dbReference type="PROSITE" id="PS50071">
    <property type="entry name" value="HOMEOBOX_2"/>
    <property type="match status" value="1"/>
</dbReference>
<evidence type="ECO:0000250" key="1"/>
<evidence type="ECO:0000255" key="2">
    <source>
        <dbReference type="PROSITE-ProRule" id="PRU00108"/>
    </source>
</evidence>
<evidence type="ECO:0000255" key="3">
    <source>
        <dbReference type="PROSITE-ProRule" id="PRU00559"/>
    </source>
</evidence>
<evidence type="ECO:0000256" key="4">
    <source>
        <dbReference type="SAM" id="MobiDB-lite"/>
    </source>
</evidence>
<evidence type="ECO:0000269" key="5">
    <source>
    </source>
</evidence>
<evidence type="ECO:0000269" key="6">
    <source>
    </source>
</evidence>
<evidence type="ECO:0000305" key="7"/>
<organism>
    <name type="scientific">Arabidopsis thaliana</name>
    <name type="common">Mouse-ear cress</name>
    <dbReference type="NCBI Taxonomy" id="3702"/>
    <lineage>
        <taxon>Eukaryota</taxon>
        <taxon>Viridiplantae</taxon>
        <taxon>Streptophyta</taxon>
        <taxon>Embryophyta</taxon>
        <taxon>Tracheophyta</taxon>
        <taxon>Spermatophyta</taxon>
        <taxon>Magnoliopsida</taxon>
        <taxon>eudicotyledons</taxon>
        <taxon>Gunneridae</taxon>
        <taxon>Pentapetalae</taxon>
        <taxon>rosids</taxon>
        <taxon>malvids</taxon>
        <taxon>Brassicales</taxon>
        <taxon>Brassicaceae</taxon>
        <taxon>Camelineae</taxon>
        <taxon>Arabidopsis</taxon>
    </lineage>
</organism>
<feature type="chain" id="PRO_0000048960" description="Homeobox protein knotted-1-like 4">
    <location>
        <begin position="1"/>
        <end position="393"/>
    </location>
</feature>
<feature type="domain" description="ELK" evidence="3">
    <location>
        <begin position="286"/>
        <end position="306"/>
    </location>
</feature>
<feature type="DNA-binding region" description="Homeobox; TALE-type" evidence="2">
    <location>
        <begin position="307"/>
        <end position="370"/>
    </location>
</feature>
<feature type="region of interest" description="Disordered" evidence="4">
    <location>
        <begin position="1"/>
        <end position="39"/>
    </location>
</feature>
<feature type="region of interest" description="Disordered" evidence="4">
    <location>
        <begin position="81"/>
        <end position="114"/>
    </location>
</feature>
<feature type="region of interest" description="Disordered" evidence="4">
    <location>
        <begin position="363"/>
        <end position="393"/>
    </location>
</feature>
<feature type="compositionally biased region" description="Polar residues" evidence="4">
    <location>
        <begin position="1"/>
        <end position="13"/>
    </location>
</feature>
<feature type="compositionally biased region" description="Polar residues" evidence="4">
    <location>
        <begin position="368"/>
        <end position="377"/>
    </location>
</feature>
<feature type="sequence conflict" description="In Ref. 1; CAA63131." evidence="7" ref="1">
    <original>S</original>
    <variation>T</variation>
    <location>
        <position position="55"/>
    </location>
</feature>